<name>RAB3C_BOVIN</name>
<evidence type="ECO:0000250" key="1"/>
<evidence type="ECO:0000250" key="2">
    <source>
        <dbReference type="UniProtKB" id="P20336"/>
    </source>
</evidence>
<evidence type="ECO:0000250" key="3">
    <source>
        <dbReference type="UniProtKB" id="P20337"/>
    </source>
</evidence>
<evidence type="ECO:0000250" key="4">
    <source>
        <dbReference type="UniProtKB" id="P62823"/>
    </source>
</evidence>
<evidence type="ECO:0000250" key="5">
    <source>
        <dbReference type="UniProtKB" id="Q63941"/>
    </source>
</evidence>
<evidence type="ECO:0000250" key="6">
    <source>
        <dbReference type="UniProtKB" id="Q96E17"/>
    </source>
</evidence>
<evidence type="ECO:0000269" key="7">
    <source>
    </source>
</evidence>
<evidence type="ECO:0000305" key="8"/>
<evidence type="ECO:0000305" key="9">
    <source>
    </source>
</evidence>
<evidence type="ECO:0007744" key="10">
    <source>
        <dbReference type="PDB" id="8A4A"/>
    </source>
</evidence>
<evidence type="ECO:0007829" key="11">
    <source>
        <dbReference type="PDB" id="8A4A"/>
    </source>
</evidence>
<comment type="function">
    <text evidence="7">The small GTPases Rab are key regulators of intracellular membrane trafficking, from the formation of transport vesicles to their fusion with membranes (PubMed:35871249). Rabs cycle between an inactive GDP-bound form and an active GTP-bound form that is able to recruit to membranes different sets of downstream effectors directly responsible for vesicle formation, movement, tethering and fusion (PubMed:35871249).</text>
</comment>
<comment type="catalytic activity">
    <reaction evidence="9">
        <text>GTP + H2O = GDP + phosphate + H(+)</text>
        <dbReference type="Rhea" id="RHEA:19669"/>
        <dbReference type="ChEBI" id="CHEBI:15377"/>
        <dbReference type="ChEBI" id="CHEBI:15378"/>
        <dbReference type="ChEBI" id="CHEBI:37565"/>
        <dbReference type="ChEBI" id="CHEBI:43474"/>
        <dbReference type="ChEBI" id="CHEBI:58189"/>
        <dbReference type="EC" id="3.6.5.2"/>
    </reaction>
    <physiologicalReaction direction="left-to-right" evidence="9">
        <dbReference type="Rhea" id="RHEA:19670"/>
    </physiologicalReaction>
</comment>
<comment type="cofactor">
    <cofactor evidence="7">
        <name>Mg(2+)</name>
        <dbReference type="ChEBI" id="CHEBI:18420"/>
    </cofactor>
</comment>
<comment type="activity regulation">
    <text evidence="2">Regulated by guanine nucleotide exchange factors (GEFs) which promote the exchange of bound GDP for free GTP. Regulated by GTPase activating proteins (GAPs) which increase the GTP hydrolysis activity. Inhibited by GDP dissociation inhibitors (GDIs) which prevent Rab-GDP dissociation.</text>
</comment>
<comment type="subunit">
    <text evidence="4 6 7">Interacts with RIMS1, RIMS2, RPH3A and RPH3AL (By similarity). The GTP-bound form interacts with REP15 (PubMed:35871249). Interacts with GDI2, CHM and CHML; phosphorylation at Thr-86 disrupts these interactions (By similarity). Interacts with MADD (via uDENN domain); the GTP-bound form is preferred for interaction (By similarity).</text>
</comment>
<comment type="subcellular location">
    <subcellularLocation>
        <location evidence="8">Cell membrane</location>
        <topology evidence="8">Lipid-anchor</topology>
        <orientation evidence="8">Cytoplasmic side</orientation>
    </subcellularLocation>
</comment>
<comment type="domain">
    <text evidence="7">Switch 1, switch 2 and the interswitch regions are characteristic of Rab GTPases and mediate the interactions with Rab downstream effectors. The switch regions undergo conformational changes upon nucleotide binding which drives interaction with specific sets of effector proteins, with most effectors only binding to GTP-bound Rab.</text>
</comment>
<comment type="PTM">
    <text evidence="6">Phosphorylation of Thr-86 in the switch II region by LRRK2 prevents the association of RAB regulatory proteins, including CHM, CHML and RAB GDP dissociation inhibitor GDI2.</text>
</comment>
<comment type="similarity">
    <text evidence="8">Belongs to the small GTPase superfamily. Rab family.</text>
</comment>
<comment type="sequence caution" evidence="8">
    <conflict type="erroneous initiation">
        <sequence resource="EMBL-CDS" id="AAA30418"/>
    </conflict>
</comment>
<gene>
    <name type="primary">RAB3C</name>
</gene>
<feature type="chain" id="PRO_0000121084" description="Ras-related protein Rab-3C">
    <location>
        <begin position="1"/>
        <end position="227"/>
    </location>
</feature>
<feature type="short sequence motif" description="Switch 1" evidence="7 10">
    <location>
        <begin position="53"/>
        <end position="66"/>
    </location>
</feature>
<feature type="short sequence motif" description="Switch 2" evidence="7 10">
    <location>
        <begin position="86"/>
        <end position="104"/>
    </location>
</feature>
<feature type="binding site" evidence="9 10">
    <location>
        <position position="39"/>
    </location>
    <ligand>
        <name>GTP</name>
        <dbReference type="ChEBI" id="CHEBI:37565"/>
    </ligand>
</feature>
<feature type="binding site" evidence="9 10">
    <location>
        <position position="42"/>
    </location>
    <ligand>
        <name>GTP</name>
        <dbReference type="ChEBI" id="CHEBI:37565"/>
    </ligand>
</feature>
<feature type="binding site" evidence="9 10">
    <location>
        <position position="43"/>
    </location>
    <ligand>
        <name>GTP</name>
        <dbReference type="ChEBI" id="CHEBI:37565"/>
    </ligand>
</feature>
<feature type="binding site" evidence="9 10">
    <location>
        <position position="44"/>
    </location>
    <ligand>
        <name>GTP</name>
        <dbReference type="ChEBI" id="CHEBI:37565"/>
    </ligand>
</feature>
<feature type="binding site" evidence="9 10">
    <location>
        <position position="44"/>
    </location>
    <ligand>
        <name>Mg(2+)</name>
        <dbReference type="ChEBI" id="CHEBI:18420"/>
    </ligand>
</feature>
<feature type="binding site" evidence="9 10">
    <location>
        <position position="45"/>
    </location>
    <ligand>
        <name>GTP</name>
        <dbReference type="ChEBI" id="CHEBI:37565"/>
    </ligand>
</feature>
<feature type="binding site" evidence="9 10">
    <location>
        <position position="56"/>
    </location>
    <ligand>
        <name>GTP</name>
        <dbReference type="ChEBI" id="CHEBI:37565"/>
    </ligand>
</feature>
<feature type="binding site" evidence="9 10">
    <location>
        <position position="57"/>
    </location>
    <ligand>
        <name>GTP</name>
        <dbReference type="ChEBI" id="CHEBI:37565"/>
    </ligand>
</feature>
<feature type="binding site" evidence="9 10">
    <location>
        <position position="61"/>
    </location>
    <ligand>
        <name>GTP</name>
        <dbReference type="ChEBI" id="CHEBI:37565"/>
    </ligand>
</feature>
<feature type="binding site" evidence="9 10">
    <location>
        <position position="62"/>
    </location>
    <ligand>
        <name>GTP</name>
        <dbReference type="ChEBI" id="CHEBI:37565"/>
    </ligand>
</feature>
<feature type="binding site" evidence="9 10">
    <location>
        <position position="62"/>
    </location>
    <ligand>
        <name>Mg(2+)</name>
        <dbReference type="ChEBI" id="CHEBI:18420"/>
    </ligand>
</feature>
<feature type="binding site" evidence="9 10">
    <location>
        <position position="85"/>
    </location>
    <ligand>
        <name>Mg(2+)</name>
        <dbReference type="ChEBI" id="CHEBI:18420"/>
    </ligand>
</feature>
<feature type="binding site" evidence="9 10">
    <location>
        <position position="88"/>
    </location>
    <ligand>
        <name>GTP</name>
        <dbReference type="ChEBI" id="CHEBI:37565"/>
    </ligand>
</feature>
<feature type="binding site" evidence="9 10">
    <location>
        <position position="143"/>
    </location>
    <ligand>
        <name>GTP</name>
        <dbReference type="ChEBI" id="CHEBI:37565"/>
    </ligand>
</feature>
<feature type="binding site" evidence="9 10">
    <location>
        <position position="144"/>
    </location>
    <ligand>
        <name>GTP</name>
        <dbReference type="ChEBI" id="CHEBI:37565"/>
    </ligand>
</feature>
<feature type="binding site" evidence="9 10">
    <location>
        <position position="146"/>
    </location>
    <ligand>
        <name>GTP</name>
        <dbReference type="ChEBI" id="CHEBI:37565"/>
    </ligand>
</feature>
<feature type="binding site" evidence="9 10">
    <location>
        <position position="174"/>
    </location>
    <ligand>
        <name>GTP</name>
        <dbReference type="ChEBI" id="CHEBI:37565"/>
    </ligand>
</feature>
<feature type="binding site" evidence="9 10">
    <location>
        <position position="175"/>
    </location>
    <ligand>
        <name>GTP</name>
        <dbReference type="ChEBI" id="CHEBI:37565"/>
    </ligand>
</feature>
<feature type="modified residue" description="Phosphothreonine" evidence="6">
    <location>
        <position position="86"/>
    </location>
</feature>
<feature type="modified residue" description="Phosphoserine" evidence="5">
    <location>
        <position position="196"/>
    </location>
</feature>
<feature type="modified residue" description="Phosphoserine" evidence="3">
    <location>
        <position position="198"/>
    </location>
</feature>
<feature type="modified residue" description="Phosphothreonine" evidence="4">
    <location>
        <position position="206"/>
    </location>
</feature>
<feature type="modified residue" description="Cysteine methyl ester" evidence="1">
    <location>
        <position position="227"/>
    </location>
</feature>
<feature type="lipid moiety-binding region" description="S-geranylgeranyl cysteine" evidence="1">
    <location>
        <position position="225"/>
    </location>
</feature>
<feature type="lipid moiety-binding region" description="S-geranylgeranyl cysteine" evidence="1">
    <location>
        <position position="227"/>
    </location>
</feature>
<feature type="sequence conflict" description="In Ref. 1; AAA30418." evidence="8" ref="1">
    <original>TQIK</original>
    <variation>LNQ</variation>
    <location>
        <begin position="126"/>
        <end position="129"/>
    </location>
</feature>
<feature type="sequence conflict" description="In Ref. 1; AAA30418." evidence="8" ref="1">
    <original>TER</original>
    <variation>SEE</variation>
    <location>
        <begin position="155"/>
        <end position="157"/>
    </location>
</feature>
<feature type="sequence conflict" description="In Ref. 1; AAA30418." evidence="8" ref="1">
    <original>Q</original>
    <variation>H</variation>
    <location>
        <position position="164"/>
    </location>
</feature>
<feature type="sequence conflict" description="In Ref. 1; AAA30418." evidence="8" ref="1">
    <original>A</original>
    <variation>P</variation>
    <location>
        <position position="204"/>
    </location>
</feature>
<feature type="sequence conflict" description="In Ref. 1; AAA30418." evidence="8" ref="1">
    <original>Q</original>
    <variation>H</variation>
    <location>
        <position position="222"/>
    </location>
</feature>
<feature type="strand" evidence="11">
    <location>
        <begin position="28"/>
        <end position="38"/>
    </location>
</feature>
<feature type="helix" evidence="11">
    <location>
        <begin position="43"/>
        <end position="52"/>
    </location>
</feature>
<feature type="strand" evidence="11">
    <location>
        <begin position="64"/>
        <end position="74"/>
    </location>
</feature>
<feature type="strand" evidence="11">
    <location>
        <begin position="77"/>
        <end position="86"/>
    </location>
</feature>
<feature type="helix" evidence="11">
    <location>
        <begin position="90"/>
        <end position="92"/>
    </location>
</feature>
<feature type="helix" evidence="11">
    <location>
        <begin position="93"/>
        <end position="98"/>
    </location>
</feature>
<feature type="strand" evidence="11">
    <location>
        <begin position="105"/>
        <end position="111"/>
    </location>
</feature>
<feature type="helix" evidence="11">
    <location>
        <begin position="115"/>
        <end position="119"/>
    </location>
</feature>
<feature type="helix" evidence="11">
    <location>
        <begin position="121"/>
        <end position="131"/>
    </location>
</feature>
<feature type="strand" evidence="11">
    <location>
        <begin position="137"/>
        <end position="143"/>
    </location>
</feature>
<feature type="helix" evidence="11">
    <location>
        <begin position="148"/>
        <end position="150"/>
    </location>
</feature>
<feature type="helix" evidence="11">
    <location>
        <begin position="155"/>
        <end position="165"/>
    </location>
</feature>
<feature type="strand" evidence="11">
    <location>
        <begin position="168"/>
        <end position="171"/>
    </location>
</feature>
<feature type="turn" evidence="11">
    <location>
        <begin position="174"/>
        <end position="177"/>
    </location>
</feature>
<feature type="helix" evidence="11">
    <location>
        <begin position="180"/>
        <end position="193"/>
    </location>
</feature>
<reference key="1">
    <citation type="journal article" date="1988" name="J. Biol. Chem.">
        <title>Nucleotide and deduced amino acid sequences of a GTP-binding protein family with molecular weights of 25,000 from bovine brain.</title>
        <authorList>
            <person name="Matsui Y."/>
            <person name="Kikuchi A."/>
            <person name="Kondo J."/>
            <person name="Hishida T."/>
            <person name="Teranishi Y."/>
            <person name="Takai Y."/>
        </authorList>
    </citation>
    <scope>NUCLEOTIDE SEQUENCE [MRNA]</scope>
</reference>
<reference key="2">
    <citation type="submission" date="2006-01" db="EMBL/GenBank/DDBJ databases">
        <authorList>
            <consortium name="NIH - Mammalian Gene Collection (MGC) project"/>
        </authorList>
    </citation>
    <scope>NUCLEOTIDE SEQUENCE [LARGE SCALE MRNA]</scope>
    <source>
        <strain>Hereford</strain>
        <tissue>Hypothalamus</tissue>
    </source>
</reference>
<reference evidence="10" key="3">
    <citation type="journal article" date="2022" name="Nat. Commun.">
        <title>Rep15 interacts with several Rab GTPases and has a distinct fold for a Rab effector.</title>
        <authorList>
            <person name="Rai A."/>
            <person name="Singh A.K."/>
            <person name="Bleimling N."/>
            <person name="Posern G."/>
            <person name="Vetter I.R."/>
            <person name="Goody R.S."/>
        </authorList>
    </citation>
    <scope>X-RAY CRYSTALLOGRAPHY (2.52 ANGSTROMS) OF 10-227 IN COMPLEX WITH MG(2+) AND PHOSPHOAMINOPHOSPHONIC ACID-GUANYLATE ESTER</scope>
    <scope>CATALYTIC ACTIVITY</scope>
    <scope>INTERACTION WITH REP15</scope>
    <scope>COFACTOR</scope>
    <scope>DOMAIN</scope>
</reference>
<accession>P10949</accession>
<accession>Q2KI25</accession>
<keyword id="KW-0002">3D-structure</keyword>
<keyword id="KW-1003">Cell membrane</keyword>
<keyword id="KW-0342">GTP-binding</keyword>
<keyword id="KW-0378">Hydrolase</keyword>
<keyword id="KW-0449">Lipoprotein</keyword>
<keyword id="KW-0472">Membrane</keyword>
<keyword id="KW-0488">Methylation</keyword>
<keyword id="KW-0547">Nucleotide-binding</keyword>
<keyword id="KW-0597">Phosphoprotein</keyword>
<keyword id="KW-0636">Prenylation</keyword>
<keyword id="KW-0653">Protein transport</keyword>
<keyword id="KW-1185">Reference proteome</keyword>
<keyword id="KW-0813">Transport</keyword>
<dbReference type="EC" id="3.6.5.2" evidence="9"/>
<dbReference type="EMBL" id="M19887">
    <property type="protein sequence ID" value="AAA30418.1"/>
    <property type="status" value="ALT_INIT"/>
    <property type="molecule type" value="mRNA"/>
</dbReference>
<dbReference type="EMBL" id="BC112795">
    <property type="protein sequence ID" value="AAI12796.1"/>
    <property type="molecule type" value="mRNA"/>
</dbReference>
<dbReference type="PIR" id="C29224">
    <property type="entry name" value="C29224"/>
</dbReference>
<dbReference type="RefSeq" id="NP_001040071.1">
    <property type="nucleotide sequence ID" value="NM_001046606.2"/>
</dbReference>
<dbReference type="PDB" id="8A4A">
    <property type="method" value="X-ray"/>
    <property type="resolution" value="2.52 A"/>
    <property type="chains" value="B=10-227"/>
</dbReference>
<dbReference type="PDBsum" id="8A4A"/>
<dbReference type="SMR" id="P10949"/>
<dbReference type="FunCoup" id="P10949">
    <property type="interactions" value="1068"/>
</dbReference>
<dbReference type="STRING" id="9913.ENSBTAP00000009611"/>
<dbReference type="PaxDb" id="9913-ENSBTAP00000009611"/>
<dbReference type="Ensembl" id="ENSBTAT00000009611.4">
    <property type="protein sequence ID" value="ENSBTAP00000009611.3"/>
    <property type="gene ID" value="ENSBTAG00000007306.6"/>
</dbReference>
<dbReference type="GeneID" id="338100"/>
<dbReference type="KEGG" id="bta:338100"/>
<dbReference type="CTD" id="115827"/>
<dbReference type="VEuPathDB" id="HostDB:ENSBTAG00000007306"/>
<dbReference type="VGNC" id="VGNC:33651">
    <property type="gene designation" value="RAB3C"/>
</dbReference>
<dbReference type="eggNOG" id="KOG0093">
    <property type="taxonomic scope" value="Eukaryota"/>
</dbReference>
<dbReference type="GeneTree" id="ENSGT00940000157368"/>
<dbReference type="HOGENOM" id="CLU_041217_10_1_1"/>
<dbReference type="InParanoid" id="P10949"/>
<dbReference type="OMA" id="PSSQCNC"/>
<dbReference type="OrthoDB" id="9989112at2759"/>
<dbReference type="TreeFam" id="TF313199"/>
<dbReference type="Reactome" id="R-BTA-8873719">
    <property type="pathway name" value="RAB geranylgeranylation"/>
</dbReference>
<dbReference type="Proteomes" id="UP000009136">
    <property type="component" value="Chromosome 20"/>
</dbReference>
<dbReference type="Bgee" id="ENSBTAG00000007306">
    <property type="expression patterns" value="Expressed in oocyte and 48 other cell types or tissues"/>
</dbReference>
<dbReference type="GO" id="GO:0005768">
    <property type="term" value="C:endosome"/>
    <property type="evidence" value="ECO:0000318"/>
    <property type="project" value="GO_Central"/>
</dbReference>
<dbReference type="GO" id="GO:0005886">
    <property type="term" value="C:plasma membrane"/>
    <property type="evidence" value="ECO:0000318"/>
    <property type="project" value="GO_Central"/>
</dbReference>
<dbReference type="GO" id="GO:0008021">
    <property type="term" value="C:synaptic vesicle"/>
    <property type="evidence" value="ECO:0000318"/>
    <property type="project" value="GO_Central"/>
</dbReference>
<dbReference type="GO" id="GO:0005525">
    <property type="term" value="F:GTP binding"/>
    <property type="evidence" value="ECO:0007669"/>
    <property type="project" value="UniProtKB-KW"/>
</dbReference>
<dbReference type="GO" id="GO:0003924">
    <property type="term" value="F:GTPase activity"/>
    <property type="evidence" value="ECO:0000318"/>
    <property type="project" value="GO_Central"/>
</dbReference>
<dbReference type="GO" id="GO:0031489">
    <property type="term" value="F:myosin V binding"/>
    <property type="evidence" value="ECO:0000318"/>
    <property type="project" value="GO_Central"/>
</dbReference>
<dbReference type="GO" id="GO:0006887">
    <property type="term" value="P:exocytosis"/>
    <property type="evidence" value="ECO:0000318"/>
    <property type="project" value="GO_Central"/>
</dbReference>
<dbReference type="GO" id="GO:0015031">
    <property type="term" value="P:protein transport"/>
    <property type="evidence" value="ECO:0007669"/>
    <property type="project" value="UniProtKB-KW"/>
</dbReference>
<dbReference type="CDD" id="cd01865">
    <property type="entry name" value="Rab3"/>
    <property type="match status" value="1"/>
</dbReference>
<dbReference type="FunFam" id="3.40.50.300:FF:000206">
    <property type="entry name" value="Ras-related protein Rab-3C"/>
    <property type="match status" value="1"/>
</dbReference>
<dbReference type="Gene3D" id="3.40.50.300">
    <property type="entry name" value="P-loop containing nucleotide triphosphate hydrolases"/>
    <property type="match status" value="1"/>
</dbReference>
<dbReference type="InterPro" id="IPR027417">
    <property type="entry name" value="P-loop_NTPase"/>
</dbReference>
<dbReference type="InterPro" id="IPR037872">
    <property type="entry name" value="Rab3"/>
</dbReference>
<dbReference type="InterPro" id="IPR005225">
    <property type="entry name" value="Small_GTP-bd"/>
</dbReference>
<dbReference type="InterPro" id="IPR001806">
    <property type="entry name" value="Small_GTPase"/>
</dbReference>
<dbReference type="InterPro" id="IPR050305">
    <property type="entry name" value="Small_GTPase_Rab"/>
</dbReference>
<dbReference type="NCBIfam" id="TIGR00231">
    <property type="entry name" value="small_GTP"/>
    <property type="match status" value="1"/>
</dbReference>
<dbReference type="PANTHER" id="PTHR47980">
    <property type="entry name" value="LD44762P"/>
    <property type="match status" value="1"/>
</dbReference>
<dbReference type="Pfam" id="PF00071">
    <property type="entry name" value="Ras"/>
    <property type="match status" value="1"/>
</dbReference>
<dbReference type="PRINTS" id="PR00449">
    <property type="entry name" value="RASTRNSFRMNG"/>
</dbReference>
<dbReference type="SMART" id="SM00175">
    <property type="entry name" value="RAB"/>
    <property type="match status" value="1"/>
</dbReference>
<dbReference type="SMART" id="SM00176">
    <property type="entry name" value="RAN"/>
    <property type="match status" value="1"/>
</dbReference>
<dbReference type="SMART" id="SM00173">
    <property type="entry name" value="RAS"/>
    <property type="match status" value="1"/>
</dbReference>
<dbReference type="SMART" id="SM00174">
    <property type="entry name" value="RHO"/>
    <property type="match status" value="1"/>
</dbReference>
<dbReference type="SUPFAM" id="SSF52540">
    <property type="entry name" value="P-loop containing nucleoside triphosphate hydrolases"/>
    <property type="match status" value="1"/>
</dbReference>
<dbReference type="PROSITE" id="PS51419">
    <property type="entry name" value="RAB"/>
    <property type="match status" value="1"/>
</dbReference>
<organism>
    <name type="scientific">Bos taurus</name>
    <name type="common">Bovine</name>
    <dbReference type="NCBI Taxonomy" id="9913"/>
    <lineage>
        <taxon>Eukaryota</taxon>
        <taxon>Metazoa</taxon>
        <taxon>Chordata</taxon>
        <taxon>Craniata</taxon>
        <taxon>Vertebrata</taxon>
        <taxon>Euteleostomi</taxon>
        <taxon>Mammalia</taxon>
        <taxon>Eutheria</taxon>
        <taxon>Laurasiatheria</taxon>
        <taxon>Artiodactyla</taxon>
        <taxon>Ruminantia</taxon>
        <taxon>Pecora</taxon>
        <taxon>Bovidae</taxon>
        <taxon>Bovinae</taxon>
        <taxon>Bos</taxon>
    </lineage>
</organism>
<proteinExistence type="evidence at protein level"/>
<sequence length="227" mass="25938">MRHEAPMQMASAQDARYGQKDSSDQNFDYMFKLLIIGNSSVGKTSFLFRYADDSFTSAFVSTVGIDFKVKTVFKNEKRIKLQIWDTAGQERYRTITTAYYRGAMGFILMYDITNEESFNAVQDWSTQIKTYSWDNAQVILVGNKCDMEDERVISTERGQHLGEQLGFEFFETSAKDNINVKQTFERLVDIICDKMSESLETDPAITAAKQNTRLKETPPPPQPNCGC</sequence>
<protein>
    <recommendedName>
        <fullName>Ras-related protein Rab-3C</fullName>
        <ecNumber evidence="9">3.6.5.2</ecNumber>
    </recommendedName>
    <alternativeName>
        <fullName>SMG P25C</fullName>
    </alternativeName>
</protein>